<sequence length="146" mass="15937">VHLSGEEKAAVTGLWGKVKVDEVGGEALGRLLVVYPWTQRFFDSFGDLSSASAVMGNPKVKAHGKKVLDSFSEGLQHLDNLKGTFAKLSELHCDKLHVDPENFRLLGNVLVCVLARHFGKEFTPQVQAAYQKVVAGVANALAHKYH</sequence>
<comment type="function">
    <text>Involved in oxygen transport from the lung to the various peripheral tissues.</text>
</comment>
<comment type="subunit">
    <text>Heterotetramer of two alpha chains and two beta chains.</text>
</comment>
<comment type="tissue specificity">
    <text>Red blood cells.</text>
</comment>
<comment type="similarity">
    <text evidence="3">Belongs to the globin family.</text>
</comment>
<evidence type="ECO:0000250" key="1">
    <source>
        <dbReference type="UniProtKB" id="P02086"/>
    </source>
</evidence>
<evidence type="ECO:0000250" key="2">
    <source>
        <dbReference type="UniProtKB" id="P68871"/>
    </source>
</evidence>
<evidence type="ECO:0000255" key="3">
    <source>
        <dbReference type="PROSITE-ProRule" id="PRU00238"/>
    </source>
</evidence>
<dbReference type="PIR" id="S01309">
    <property type="entry name" value="HBFXB"/>
</dbReference>
<dbReference type="SMR" id="P14391"/>
<dbReference type="eggNOG" id="KOG3378">
    <property type="taxonomic scope" value="Eukaryota"/>
</dbReference>
<dbReference type="GO" id="GO:0072562">
    <property type="term" value="C:blood microparticle"/>
    <property type="evidence" value="ECO:0007669"/>
    <property type="project" value="TreeGrafter"/>
</dbReference>
<dbReference type="GO" id="GO:0031838">
    <property type="term" value="C:haptoglobin-hemoglobin complex"/>
    <property type="evidence" value="ECO:0007669"/>
    <property type="project" value="TreeGrafter"/>
</dbReference>
<dbReference type="GO" id="GO:0005833">
    <property type="term" value="C:hemoglobin complex"/>
    <property type="evidence" value="ECO:0007669"/>
    <property type="project" value="InterPro"/>
</dbReference>
<dbReference type="GO" id="GO:0031720">
    <property type="term" value="F:haptoglobin binding"/>
    <property type="evidence" value="ECO:0007669"/>
    <property type="project" value="TreeGrafter"/>
</dbReference>
<dbReference type="GO" id="GO:0020037">
    <property type="term" value="F:heme binding"/>
    <property type="evidence" value="ECO:0007669"/>
    <property type="project" value="InterPro"/>
</dbReference>
<dbReference type="GO" id="GO:0031721">
    <property type="term" value="F:hemoglobin alpha binding"/>
    <property type="evidence" value="ECO:0007669"/>
    <property type="project" value="TreeGrafter"/>
</dbReference>
<dbReference type="GO" id="GO:0046872">
    <property type="term" value="F:metal ion binding"/>
    <property type="evidence" value="ECO:0007669"/>
    <property type="project" value="UniProtKB-KW"/>
</dbReference>
<dbReference type="GO" id="GO:0043177">
    <property type="term" value="F:organic acid binding"/>
    <property type="evidence" value="ECO:0007669"/>
    <property type="project" value="TreeGrafter"/>
</dbReference>
<dbReference type="GO" id="GO:0019825">
    <property type="term" value="F:oxygen binding"/>
    <property type="evidence" value="ECO:0007669"/>
    <property type="project" value="InterPro"/>
</dbReference>
<dbReference type="GO" id="GO:0005344">
    <property type="term" value="F:oxygen carrier activity"/>
    <property type="evidence" value="ECO:0007669"/>
    <property type="project" value="UniProtKB-KW"/>
</dbReference>
<dbReference type="GO" id="GO:0004601">
    <property type="term" value="F:peroxidase activity"/>
    <property type="evidence" value="ECO:0007669"/>
    <property type="project" value="TreeGrafter"/>
</dbReference>
<dbReference type="GO" id="GO:0042744">
    <property type="term" value="P:hydrogen peroxide catabolic process"/>
    <property type="evidence" value="ECO:0007669"/>
    <property type="project" value="TreeGrafter"/>
</dbReference>
<dbReference type="CDD" id="cd08925">
    <property type="entry name" value="Hb-beta-like"/>
    <property type="match status" value="1"/>
</dbReference>
<dbReference type="FunFam" id="1.10.490.10:FF:000001">
    <property type="entry name" value="Hemoglobin subunit beta"/>
    <property type="match status" value="1"/>
</dbReference>
<dbReference type="Gene3D" id="1.10.490.10">
    <property type="entry name" value="Globins"/>
    <property type="match status" value="1"/>
</dbReference>
<dbReference type="InterPro" id="IPR000971">
    <property type="entry name" value="Globin"/>
</dbReference>
<dbReference type="InterPro" id="IPR009050">
    <property type="entry name" value="Globin-like_sf"/>
</dbReference>
<dbReference type="InterPro" id="IPR012292">
    <property type="entry name" value="Globin/Proto"/>
</dbReference>
<dbReference type="InterPro" id="IPR002337">
    <property type="entry name" value="Hemoglobin_b"/>
</dbReference>
<dbReference type="InterPro" id="IPR050056">
    <property type="entry name" value="Hemoglobin_oxygen_transport"/>
</dbReference>
<dbReference type="PANTHER" id="PTHR11442">
    <property type="entry name" value="HEMOGLOBIN FAMILY MEMBER"/>
    <property type="match status" value="1"/>
</dbReference>
<dbReference type="PANTHER" id="PTHR11442:SF42">
    <property type="entry name" value="HEMOGLOBIN SUBUNIT BETA"/>
    <property type="match status" value="1"/>
</dbReference>
<dbReference type="Pfam" id="PF00042">
    <property type="entry name" value="Globin"/>
    <property type="match status" value="1"/>
</dbReference>
<dbReference type="PRINTS" id="PR00814">
    <property type="entry name" value="BETAHAEM"/>
</dbReference>
<dbReference type="SUPFAM" id="SSF46458">
    <property type="entry name" value="Globin-like"/>
    <property type="match status" value="1"/>
</dbReference>
<dbReference type="PROSITE" id="PS01033">
    <property type="entry name" value="GLOBIN"/>
    <property type="match status" value="1"/>
</dbReference>
<keyword id="KW-0007">Acetylation</keyword>
<keyword id="KW-0903">Direct protein sequencing</keyword>
<keyword id="KW-0349">Heme</keyword>
<keyword id="KW-0408">Iron</keyword>
<keyword id="KW-0479">Metal-binding</keyword>
<keyword id="KW-0561">Oxygen transport</keyword>
<keyword id="KW-0597">Phosphoprotein</keyword>
<keyword id="KW-0702">S-nitrosylation</keyword>
<keyword id="KW-0813">Transport</keyword>
<proteinExistence type="evidence at protein level"/>
<protein>
    <recommendedName>
        <fullName>Hemoglobin subunit beta</fullName>
    </recommendedName>
    <alternativeName>
        <fullName>Beta-globin</fullName>
    </alternativeName>
    <alternativeName>
        <fullName>Hemoglobin beta chain</fullName>
    </alternativeName>
</protein>
<accession>P14391</accession>
<gene>
    <name type="primary">HBB</name>
</gene>
<feature type="chain" id="PRO_0000053082" description="Hemoglobin subunit beta">
    <location>
        <begin position="1"/>
        <end position="146"/>
    </location>
</feature>
<feature type="domain" description="Globin" evidence="3">
    <location>
        <begin position="2"/>
        <end position="146"/>
    </location>
</feature>
<feature type="binding site" description="distal binding residue">
    <location>
        <position position="63"/>
    </location>
    <ligand>
        <name>heme b</name>
        <dbReference type="ChEBI" id="CHEBI:60344"/>
    </ligand>
    <ligandPart>
        <name>Fe</name>
        <dbReference type="ChEBI" id="CHEBI:18248"/>
    </ligandPart>
</feature>
<feature type="binding site" description="proximal binding residue">
    <location>
        <position position="92"/>
    </location>
    <ligand>
        <name>heme b</name>
        <dbReference type="ChEBI" id="CHEBI:60344"/>
    </ligand>
    <ligandPart>
        <name>Fe</name>
        <dbReference type="ChEBI" id="CHEBI:18248"/>
    </ligandPart>
</feature>
<feature type="modified residue" description="N-acetylvaline" evidence="1">
    <location>
        <position position="1"/>
    </location>
</feature>
<feature type="modified residue" description="Phosphothreonine" evidence="2">
    <location>
        <position position="12"/>
    </location>
</feature>
<feature type="modified residue" description="Phosphoserine" evidence="2">
    <location>
        <position position="44"/>
    </location>
</feature>
<feature type="modified residue" description="N6-acetyllysine" evidence="2">
    <location>
        <position position="59"/>
    </location>
</feature>
<feature type="modified residue" description="N6-acetyllysine" evidence="2">
    <location>
        <position position="82"/>
    </location>
</feature>
<feature type="modified residue" description="S-nitrosocysteine" evidence="2">
    <location>
        <position position="93"/>
    </location>
</feature>
<feature type="modified residue" description="N6-acetyllysine" evidence="2">
    <location>
        <position position="144"/>
    </location>
</feature>
<feature type="sequence variant">
    <original>N</original>
    <variation>T</variation>
    <location>
        <position position="139"/>
    </location>
</feature>
<name>HBB_PTEAL</name>
<reference key="1">
    <citation type="journal article" date="1988" name="Biol. Chem. Hoppe-Seyler">
        <title>The primary structure of the hemoglobin from the grey-headed flying fox (Pteropus poliocephalus) and the black flying fox (P. alecto, Megachiroptera).</title>
        <authorList>
            <person name="Kleinschmidt T."/>
            <person name="Sgouros J.G."/>
            <person name="Pettigrew J.D."/>
            <person name="Braunitzer G."/>
        </authorList>
    </citation>
    <scope>PROTEIN SEQUENCE</scope>
</reference>
<organism>
    <name type="scientific">Pteropus alecto</name>
    <name type="common">Black flying fox</name>
    <dbReference type="NCBI Taxonomy" id="9402"/>
    <lineage>
        <taxon>Eukaryota</taxon>
        <taxon>Metazoa</taxon>
        <taxon>Chordata</taxon>
        <taxon>Craniata</taxon>
        <taxon>Vertebrata</taxon>
        <taxon>Euteleostomi</taxon>
        <taxon>Mammalia</taxon>
        <taxon>Eutheria</taxon>
        <taxon>Laurasiatheria</taxon>
        <taxon>Chiroptera</taxon>
        <taxon>Yinpterochiroptera</taxon>
        <taxon>Pteropodoidea</taxon>
        <taxon>Pteropodidae</taxon>
        <taxon>Pteropodinae</taxon>
        <taxon>Pteropus</taxon>
    </lineage>
</organism>